<sequence>MTSLSPPVVTTPTVPNPATKPLSPFSQNNSQVSLLTKPKRSFARKVSCKATNNDQNDQAQSKLDRRNVLLGLGGLYGVAGMGTDPFAFAKPIAPPDVSKCGPADLPQGAVPTNCCPPPSTKIIDFKLPAPAKLRIRPPAHAVDQAYRDKYYKAMELMKALPDDDPRSFKQQAAVHCAYCDGAYDQVGFPELELQIHNSWLFFPFHRYYLYFFEKILGKLINDPTFALPFWNWDSPAGMPLPAIYADPKSPLYDKLRSANHQPPTLVDLDYNGTEDNVSKETTINANLKIMYRQMVSNSKNAKLFFGNPYRAGDEPDPGGGSIEGTPHAPVHLWTGDNTQPNFEDMGNFYSAGRDPIFFAHHSNVDRMWSIWKTLGGKRTDLTDSDWLDSGFLFYNENAELVRVKVRDCLETKNLGYVYQDVDIPWLSSKPTPRRAKVALSKVAKKLGVAHAAVASSSKVVAGTEFPISLGSKISTVVKRPKQKKRSKKAKEDEEEILVIEGIEFDRDVAVKFDVYVNDVDDLPSGPDKTEFAGSFVSVPHSHKHKKKMNTILRLGLTDLLEEIEAEDDDSVVVTLVPKFGAVKIGGIKIEFAS</sequence>
<feature type="transit peptide" description="Chloroplast" evidence="2">
    <location>
        <begin position="1"/>
        <end position="89"/>
    </location>
</feature>
<feature type="chain" id="PRO_0000035916" description="Polyphenol oxidase, chloroplastic">
    <location>
        <begin position="90"/>
        <end position="593"/>
    </location>
</feature>
<feature type="region of interest" description="Disordered" evidence="3">
    <location>
        <begin position="1"/>
        <end position="34"/>
    </location>
</feature>
<feature type="compositionally biased region" description="Low complexity" evidence="3">
    <location>
        <begin position="1"/>
        <end position="13"/>
    </location>
</feature>
<feature type="compositionally biased region" description="Polar residues" evidence="3">
    <location>
        <begin position="24"/>
        <end position="34"/>
    </location>
</feature>
<feature type="binding site" evidence="1">
    <location>
        <position position="175"/>
    </location>
    <ligand>
        <name>Cu cation</name>
        <dbReference type="ChEBI" id="CHEBI:23378"/>
        <label>A</label>
    </ligand>
</feature>
<feature type="binding site" evidence="1">
    <location>
        <position position="196"/>
    </location>
    <ligand>
        <name>Cu cation</name>
        <dbReference type="ChEBI" id="CHEBI:23378"/>
        <label>A</label>
    </ligand>
</feature>
<feature type="binding site" evidence="1">
    <location>
        <position position="205"/>
    </location>
    <ligand>
        <name>Cu cation</name>
        <dbReference type="ChEBI" id="CHEBI:23378"/>
        <label>A</label>
    </ligand>
</feature>
<feature type="binding site" evidence="1">
    <location>
        <position position="327"/>
    </location>
    <ligand>
        <name>Cu cation</name>
        <dbReference type="ChEBI" id="CHEBI:23378"/>
        <label>B</label>
    </ligand>
</feature>
<feature type="binding site" evidence="1">
    <location>
        <position position="331"/>
    </location>
    <ligand>
        <name>Cu cation</name>
        <dbReference type="ChEBI" id="CHEBI:23378"/>
        <label>B</label>
    </ligand>
</feature>
<feature type="binding site" evidence="1">
    <location>
        <position position="361"/>
    </location>
    <ligand>
        <name>Cu cation</name>
        <dbReference type="ChEBI" id="CHEBI:23378"/>
        <label>B</label>
    </ligand>
</feature>
<feature type="disulfide bond" evidence="1">
    <location>
        <begin position="100"/>
        <end position="115"/>
    </location>
</feature>
<feature type="disulfide bond" evidence="1">
    <location>
        <begin position="114"/>
        <end position="176"/>
    </location>
</feature>
<feature type="cross-link" description="2'-(S-cysteinyl)-histidine (Cys-His)" evidence="1">
    <location>
        <begin position="179"/>
        <end position="196"/>
    </location>
</feature>
<feature type="strand" evidence="5">
    <location>
        <begin position="122"/>
        <end position="124"/>
    </location>
</feature>
<feature type="strand" evidence="5">
    <location>
        <begin position="134"/>
        <end position="136"/>
    </location>
</feature>
<feature type="helix" evidence="5">
    <location>
        <begin position="139"/>
        <end position="141"/>
    </location>
</feature>
<feature type="helix" evidence="5">
    <location>
        <begin position="144"/>
        <end position="159"/>
    </location>
</feature>
<feature type="helix" evidence="5">
    <location>
        <begin position="168"/>
        <end position="179"/>
    </location>
</feature>
<feature type="strand" evidence="5">
    <location>
        <begin position="182"/>
        <end position="184"/>
    </location>
</feature>
<feature type="strand" evidence="5">
    <location>
        <begin position="196"/>
        <end position="198"/>
    </location>
</feature>
<feature type="helix" evidence="5">
    <location>
        <begin position="201"/>
        <end position="219"/>
    </location>
</feature>
<feature type="helix" evidence="5">
    <location>
        <begin position="235"/>
        <end position="237"/>
    </location>
</feature>
<feature type="helix" evidence="5">
    <location>
        <begin position="242"/>
        <end position="245"/>
    </location>
</feature>
<feature type="strand" evidence="5">
    <location>
        <begin position="254"/>
        <end position="256"/>
    </location>
</feature>
<feature type="helix" evidence="5">
    <location>
        <begin position="279"/>
        <end position="294"/>
    </location>
</feature>
<feature type="turn" evidence="5">
    <location>
        <begin position="295"/>
        <end position="297"/>
    </location>
</feature>
<feature type="helix" evidence="5">
    <location>
        <begin position="301"/>
        <end position="305"/>
    </location>
</feature>
<feature type="helix" evidence="5">
    <location>
        <begin position="321"/>
        <end position="324"/>
    </location>
</feature>
<feature type="helix" evidence="5">
    <location>
        <begin position="327"/>
        <end position="334"/>
    </location>
</feature>
<feature type="turn" evidence="5">
    <location>
        <begin position="343"/>
        <end position="346"/>
    </location>
</feature>
<feature type="turn" evidence="5">
    <location>
        <begin position="348"/>
        <end position="350"/>
    </location>
</feature>
<feature type="helix" evidence="5">
    <location>
        <begin position="351"/>
        <end position="353"/>
    </location>
</feature>
<feature type="helix" evidence="5">
    <location>
        <begin position="356"/>
        <end position="372"/>
    </location>
</feature>
<feature type="helix" evidence="5">
    <location>
        <begin position="384"/>
        <end position="387"/>
    </location>
</feature>
<feature type="strand" evidence="5">
    <location>
        <begin position="390"/>
        <end position="394"/>
    </location>
</feature>
<feature type="strand" evidence="5">
    <location>
        <begin position="400"/>
        <end position="404"/>
    </location>
</feature>
<feature type="helix" evidence="5">
    <location>
        <begin position="405"/>
        <end position="408"/>
    </location>
</feature>
<feature type="helix" evidence="5">
    <location>
        <begin position="411"/>
        <end position="414"/>
    </location>
</feature>
<feature type="strand" evidence="5">
    <location>
        <begin position="416"/>
        <end position="418"/>
    </location>
</feature>
<feature type="turn" evidence="5">
    <location>
        <begin position="424"/>
        <end position="427"/>
    </location>
</feature>
<feature type="helix" evidence="5">
    <location>
        <begin position="433"/>
        <end position="436"/>
    </location>
</feature>
<feature type="helix" evidence="5">
    <location>
        <begin position="451"/>
        <end position="454"/>
    </location>
</feature>
<feature type="strand" evidence="5">
    <location>
        <begin position="457"/>
        <end position="459"/>
    </location>
</feature>
<feature type="helix" evidence="6">
    <location>
        <begin position="462"/>
        <end position="464"/>
    </location>
</feature>
<feature type="strand" evidence="6">
    <location>
        <begin position="466"/>
        <end position="468"/>
    </location>
</feature>
<feature type="strand" evidence="6">
    <location>
        <begin position="473"/>
        <end position="478"/>
    </location>
</feature>
<feature type="helix" evidence="6">
    <location>
        <begin position="482"/>
        <end position="485"/>
    </location>
</feature>
<feature type="turn" evidence="6">
    <location>
        <begin position="487"/>
        <end position="492"/>
    </location>
</feature>
<feature type="strand" evidence="6">
    <location>
        <begin position="496"/>
        <end position="505"/>
    </location>
</feature>
<feature type="strand" evidence="6">
    <location>
        <begin position="510"/>
        <end position="518"/>
    </location>
</feature>
<feature type="strand" evidence="6">
    <location>
        <begin position="530"/>
        <end position="537"/>
    </location>
</feature>
<feature type="strand" evidence="6">
    <location>
        <begin position="546"/>
        <end position="555"/>
    </location>
</feature>
<feature type="helix" evidence="6">
    <location>
        <begin position="557"/>
        <end position="563"/>
    </location>
</feature>
<feature type="strand" evidence="6">
    <location>
        <begin position="569"/>
        <end position="580"/>
    </location>
</feature>
<feature type="strand" evidence="6">
    <location>
        <begin position="586"/>
        <end position="590"/>
    </location>
</feature>
<evidence type="ECO:0000250" key="1">
    <source>
        <dbReference type="UniProtKB" id="Q9ZP19"/>
    </source>
</evidence>
<evidence type="ECO:0000255" key="2"/>
<evidence type="ECO:0000256" key="3">
    <source>
        <dbReference type="SAM" id="MobiDB-lite"/>
    </source>
</evidence>
<evidence type="ECO:0000305" key="4"/>
<evidence type="ECO:0007829" key="5">
    <source>
        <dbReference type="PDB" id="6ELS"/>
    </source>
</evidence>
<evidence type="ECO:0007829" key="6">
    <source>
        <dbReference type="PDB" id="6ELV"/>
    </source>
</evidence>
<name>PPO_MALDO</name>
<dbReference type="EC" id="1.10.3.1"/>
<dbReference type="EMBL" id="L29450">
    <property type="protein sequence ID" value="AAA69902.1"/>
    <property type="molecule type" value="mRNA"/>
</dbReference>
<dbReference type="PIR" id="S52984">
    <property type="entry name" value="S52984"/>
</dbReference>
<dbReference type="RefSeq" id="NP_001306190.1">
    <property type="nucleotide sequence ID" value="NM_001319261.1"/>
</dbReference>
<dbReference type="PDB" id="6ELS">
    <property type="method" value="X-ray"/>
    <property type="resolution" value="1.35 A"/>
    <property type="chains" value="A=90-593"/>
</dbReference>
<dbReference type="PDB" id="6ELT">
    <property type="method" value="X-ray"/>
    <property type="resolution" value="1.35 A"/>
    <property type="chains" value="A=458-593"/>
</dbReference>
<dbReference type="PDB" id="6ELV">
    <property type="method" value="X-ray"/>
    <property type="resolution" value="1.05 A"/>
    <property type="chains" value="A=451-593"/>
</dbReference>
<dbReference type="PDBsum" id="6ELS"/>
<dbReference type="PDBsum" id="6ELT"/>
<dbReference type="PDBsum" id="6ELV"/>
<dbReference type="SMR" id="P43309"/>
<dbReference type="EnsemblPlants" id="mRNA:MD10G0254000">
    <property type="protein sequence ID" value="CDS:MD10G0254000.1"/>
    <property type="gene ID" value="MD10G0254000"/>
</dbReference>
<dbReference type="GeneID" id="103446446"/>
<dbReference type="Gramene" id="mRNA:MD10G0254000">
    <property type="protein sequence ID" value="CDS:MD10G0254000.1"/>
    <property type="gene ID" value="MD10G0254000"/>
</dbReference>
<dbReference type="KEGG" id="mdm:103446446"/>
<dbReference type="OrthoDB" id="6132182at2759"/>
<dbReference type="BRENDA" id="1.14.18.1">
    <property type="organism ID" value="3164"/>
</dbReference>
<dbReference type="SABIO-RK" id="P43309"/>
<dbReference type="GO" id="GO:0009543">
    <property type="term" value="C:chloroplast thylakoid lumen"/>
    <property type="evidence" value="ECO:0007669"/>
    <property type="project" value="UniProtKB-SubCell"/>
</dbReference>
<dbReference type="GO" id="GO:0004097">
    <property type="term" value="F:catechol oxidase activity"/>
    <property type="evidence" value="ECO:0007669"/>
    <property type="project" value="UniProtKB-EC"/>
</dbReference>
<dbReference type="GO" id="GO:0046872">
    <property type="term" value="F:metal ion binding"/>
    <property type="evidence" value="ECO:0007669"/>
    <property type="project" value="UniProtKB-KW"/>
</dbReference>
<dbReference type="GO" id="GO:0046148">
    <property type="term" value="P:pigment biosynthetic process"/>
    <property type="evidence" value="ECO:0007669"/>
    <property type="project" value="InterPro"/>
</dbReference>
<dbReference type="FunFam" id="1.10.1280.10:FF:000007">
    <property type="entry name" value="Polyphenol oxidase, chloroplastic"/>
    <property type="match status" value="1"/>
</dbReference>
<dbReference type="Gene3D" id="1.10.1280.10">
    <property type="entry name" value="Di-copper center containing domain from catechol oxidase"/>
    <property type="match status" value="1"/>
</dbReference>
<dbReference type="InterPro" id="IPR008922">
    <property type="entry name" value="Di-copper_centre_dom_sf"/>
</dbReference>
<dbReference type="InterPro" id="IPR016213">
    <property type="entry name" value="Polyphenol_oxidase"/>
</dbReference>
<dbReference type="InterPro" id="IPR022740">
    <property type="entry name" value="Polyphenol_oxidase_C"/>
</dbReference>
<dbReference type="InterPro" id="IPR022739">
    <property type="entry name" value="Polyphenol_oxidase_cen"/>
</dbReference>
<dbReference type="InterPro" id="IPR050316">
    <property type="entry name" value="Tyrosinase/Hemocyanin"/>
</dbReference>
<dbReference type="InterPro" id="IPR002227">
    <property type="entry name" value="Tyrosinase_Cu-bd"/>
</dbReference>
<dbReference type="PANTHER" id="PTHR11474:SF95">
    <property type="entry name" value="POLYPHENOL OXIDASE, CHLOROPLASTIC-LIKE"/>
    <property type="match status" value="1"/>
</dbReference>
<dbReference type="PANTHER" id="PTHR11474">
    <property type="entry name" value="TYROSINASE FAMILY MEMBER"/>
    <property type="match status" value="1"/>
</dbReference>
<dbReference type="Pfam" id="PF12142">
    <property type="entry name" value="PPO1_DWL"/>
    <property type="match status" value="1"/>
</dbReference>
<dbReference type="Pfam" id="PF12143">
    <property type="entry name" value="PPO1_KFDV"/>
    <property type="match status" value="1"/>
</dbReference>
<dbReference type="Pfam" id="PF00264">
    <property type="entry name" value="Tyrosinase"/>
    <property type="match status" value="1"/>
</dbReference>
<dbReference type="PIRSF" id="PIRSF000290">
    <property type="entry name" value="PPO_plant"/>
    <property type="match status" value="1"/>
</dbReference>
<dbReference type="PRINTS" id="PR00092">
    <property type="entry name" value="TYROSINASE"/>
</dbReference>
<dbReference type="SUPFAM" id="SSF48056">
    <property type="entry name" value="Di-copper centre-containing domain"/>
    <property type="match status" value="1"/>
</dbReference>
<dbReference type="PROSITE" id="PS00497">
    <property type="entry name" value="TYROSINASE_1"/>
    <property type="match status" value="1"/>
</dbReference>
<dbReference type="PROSITE" id="PS00498">
    <property type="entry name" value="TYROSINASE_2"/>
    <property type="match status" value="1"/>
</dbReference>
<organism>
    <name type="scientific">Malus domestica</name>
    <name type="common">Apple</name>
    <name type="synonym">Pyrus malus</name>
    <dbReference type="NCBI Taxonomy" id="3750"/>
    <lineage>
        <taxon>Eukaryota</taxon>
        <taxon>Viridiplantae</taxon>
        <taxon>Streptophyta</taxon>
        <taxon>Embryophyta</taxon>
        <taxon>Tracheophyta</taxon>
        <taxon>Spermatophyta</taxon>
        <taxon>Magnoliopsida</taxon>
        <taxon>eudicotyledons</taxon>
        <taxon>Gunneridae</taxon>
        <taxon>Pentapetalae</taxon>
        <taxon>rosids</taxon>
        <taxon>fabids</taxon>
        <taxon>Rosales</taxon>
        <taxon>Rosaceae</taxon>
        <taxon>Amygdaloideae</taxon>
        <taxon>Maleae</taxon>
        <taxon>Malus</taxon>
    </lineage>
</organism>
<comment type="function">
    <text>Catalyzes the oxidation of mono- and o-diphenols to o-diquinones.</text>
</comment>
<comment type="catalytic activity">
    <reaction>
        <text>2 catechol + O2 = 2 1,2-benzoquinone + 2 H2O</text>
        <dbReference type="Rhea" id="RHEA:21632"/>
        <dbReference type="ChEBI" id="CHEBI:15377"/>
        <dbReference type="ChEBI" id="CHEBI:15379"/>
        <dbReference type="ChEBI" id="CHEBI:17253"/>
        <dbReference type="ChEBI" id="CHEBI:18135"/>
        <dbReference type="EC" id="1.10.3.1"/>
    </reaction>
</comment>
<comment type="cofactor">
    <cofactor evidence="1">
        <name>Cu(2+)</name>
        <dbReference type="ChEBI" id="CHEBI:29036"/>
    </cofactor>
    <text evidence="1">Binds 2 copper ions per subunit.</text>
</comment>
<comment type="subcellular location">
    <subcellularLocation>
        <location>Plastid</location>
        <location>Chloroplast thylakoid lumen</location>
    </subcellularLocation>
</comment>
<comment type="similarity">
    <text evidence="4">Belongs to the tyrosinase family.</text>
</comment>
<reference key="1">
    <citation type="journal article" date="1995" name="Plant Mol. Biol.">
        <title>An apple polyphenol oxidase cDNA is up-regulated in wounded tissues.</title>
        <authorList>
            <person name="Boss P.K."/>
            <person name="Gardner R.C."/>
            <person name="Janssen B.-J."/>
            <person name="Ross G.S."/>
        </authorList>
    </citation>
    <scope>NUCLEOTIDE SEQUENCE [MRNA]</scope>
    <source>
        <tissue>Skin</tissue>
    </source>
</reference>
<keyword id="KW-0002">3D-structure</keyword>
<keyword id="KW-0150">Chloroplast</keyword>
<keyword id="KW-0186">Copper</keyword>
<keyword id="KW-1015">Disulfide bond</keyword>
<keyword id="KW-0479">Metal-binding</keyword>
<keyword id="KW-0560">Oxidoreductase</keyword>
<keyword id="KW-0934">Plastid</keyword>
<keyword id="KW-0883">Thioether bond</keyword>
<keyword id="KW-0793">Thylakoid</keyword>
<keyword id="KW-0809">Transit peptide</keyword>
<proteinExistence type="evidence at protein level"/>
<protein>
    <recommendedName>
        <fullName>Polyphenol oxidase, chloroplastic</fullName>
        <shortName>PPO</shortName>
        <ecNumber>1.10.3.1</ecNumber>
    </recommendedName>
    <alternativeName>
        <fullName>Catechol oxidase</fullName>
    </alternativeName>
</protein>
<accession>P43309</accession>